<dbReference type="EMBL" id="BC077099">
    <property type="protein sequence ID" value="AAH77099.1"/>
    <property type="molecule type" value="mRNA"/>
</dbReference>
<dbReference type="FunCoup" id="Q6DEL2">
    <property type="interactions" value="2340"/>
</dbReference>
<dbReference type="STRING" id="7955.ENSDARP00000046647"/>
<dbReference type="GlyCosmos" id="Q6DEL2">
    <property type="glycosylation" value="5 sites, No reported glycans"/>
</dbReference>
<dbReference type="PaxDb" id="7955-ENSDARP00000046647"/>
<dbReference type="AGR" id="ZFIN:ZDB-GENE-040801-265"/>
<dbReference type="ZFIN" id="ZDB-GENE-040801-265">
    <property type="gene designation" value="clptm1"/>
</dbReference>
<dbReference type="eggNOG" id="KOG2489">
    <property type="taxonomic scope" value="Eukaryota"/>
</dbReference>
<dbReference type="InParanoid" id="Q6DEL2"/>
<dbReference type="OrthoDB" id="378564at2759"/>
<dbReference type="PhylomeDB" id="Q6DEL2"/>
<dbReference type="PRO" id="PR:Q6DEL2"/>
<dbReference type="Proteomes" id="UP000000437">
    <property type="component" value="Unplaced"/>
</dbReference>
<dbReference type="GO" id="GO:0012505">
    <property type="term" value="C:endomembrane system"/>
    <property type="evidence" value="ECO:0000318"/>
    <property type="project" value="GO_Central"/>
</dbReference>
<dbReference type="GO" id="GO:0016020">
    <property type="term" value="C:membrane"/>
    <property type="evidence" value="ECO:0000318"/>
    <property type="project" value="GO_Central"/>
</dbReference>
<dbReference type="GO" id="GO:0030154">
    <property type="term" value="P:cell differentiation"/>
    <property type="evidence" value="ECO:0007669"/>
    <property type="project" value="UniProtKB-KW"/>
</dbReference>
<dbReference type="InterPro" id="IPR008429">
    <property type="entry name" value="CLPTM1"/>
</dbReference>
<dbReference type="PANTHER" id="PTHR21347">
    <property type="entry name" value="CLEFT LIP AND PALATE ASSOCIATED TRANSMEMBRANE PROTEIN-RELATED"/>
    <property type="match status" value="1"/>
</dbReference>
<dbReference type="PANTHER" id="PTHR21347:SF14">
    <property type="entry name" value="LIPID SCRAMBLASE CLPTM1-RELATED"/>
    <property type="match status" value="1"/>
</dbReference>
<dbReference type="Pfam" id="PF05602">
    <property type="entry name" value="CLPTM1"/>
    <property type="match status" value="1"/>
</dbReference>
<protein>
    <recommendedName>
        <fullName>Putative lipid scramblase CLPTM1</fullName>
    </recommendedName>
    <alternativeName>
        <fullName>Cleft lip and palate transmembrane protein 1 homolog</fullName>
    </alternativeName>
</protein>
<reference key="1">
    <citation type="submission" date="2004-07" db="EMBL/GenBank/DDBJ databases">
        <authorList>
            <consortium name="NIH - Zebrafish Gene Collection (ZGC) project"/>
        </authorList>
    </citation>
    <scope>NUCLEOTIDE SEQUENCE [LARGE SCALE MRNA]</scope>
    <source>
        <tissue>Embryo</tissue>
    </source>
</reference>
<comment type="function">
    <text evidence="1 2 3">Involved in GABAergic but not glutamatergic transmission. Binds and traps GABAA receptors in the endoplasmic reticulum (ER). Modulates postsynaptic GABAergic transmission, and therefore inhibitory neurotransmission, by reducing the plasma membrane expression of these receptors. Altered GABAergic signaling is one among many causes of cleft palate (By similarity). Might function as a lipid scramblase, translocating lipids in membranes from one leaflet to the other one (By similarity). Required for efficient glycosylphosphatidylinositol (GPI) inositol deacylation in the ER, which is a crucial step to switch GPI-anchored proteins (GPI-APs) from protein folding to transport states (By similarity). May play a role in T-cell development (By similarity).</text>
</comment>
<comment type="subcellular location">
    <subcellularLocation>
        <location evidence="6">Membrane</location>
        <topology evidence="4">Multi-pass membrane protein</topology>
    </subcellularLocation>
</comment>
<comment type="similarity">
    <text evidence="6">Belongs to the CLPTM1 family.</text>
</comment>
<evidence type="ECO:0000250" key="1">
    <source>
        <dbReference type="UniProtKB" id="O96005"/>
    </source>
</evidence>
<evidence type="ECO:0000250" key="2">
    <source>
        <dbReference type="UniProtKB" id="Q8VBZ3"/>
    </source>
</evidence>
<evidence type="ECO:0000250" key="3">
    <source>
        <dbReference type="UniProtKB" id="Q96KA5"/>
    </source>
</evidence>
<evidence type="ECO:0000255" key="4"/>
<evidence type="ECO:0000256" key="5">
    <source>
        <dbReference type="SAM" id="MobiDB-lite"/>
    </source>
</evidence>
<evidence type="ECO:0000305" key="6"/>
<proteinExistence type="evidence at transcript level"/>
<name>CLPT1_DANRE</name>
<gene>
    <name type="primary">clptm1</name>
    <name type="ORF">zgc:100803</name>
</gene>
<organism>
    <name type="scientific">Danio rerio</name>
    <name type="common">Zebrafish</name>
    <name type="synonym">Brachydanio rerio</name>
    <dbReference type="NCBI Taxonomy" id="7955"/>
    <lineage>
        <taxon>Eukaryota</taxon>
        <taxon>Metazoa</taxon>
        <taxon>Chordata</taxon>
        <taxon>Craniata</taxon>
        <taxon>Vertebrata</taxon>
        <taxon>Euteleostomi</taxon>
        <taxon>Actinopterygii</taxon>
        <taxon>Neopterygii</taxon>
        <taxon>Teleostei</taxon>
        <taxon>Ostariophysi</taxon>
        <taxon>Cypriniformes</taxon>
        <taxon>Danionidae</taxon>
        <taxon>Danioninae</taxon>
        <taxon>Danio</taxon>
    </lineage>
</organism>
<sequence length="631" mass="72898">MAAQETQATQQSSVSNGEVSSNGAAASGQVAQTGATAQDPQQQQQQQPSAWQVIKGVLFRIFIIWAISSWFRRGPSTPDPNTPAGAPRVPSRNLFPKDTLMDLYVYISQSEIFTDFNNTEELFWYQQDLVYGEWTTGDSGDGCYEYYKELDLSESVKQNGSIYMHIYFTKSGFHPDPKRKGQYRRLSTVHATRMLNKYKRRKFLKTKNLLTGETEADPEMIKRAESHGPVEIISHWHPNLTINMVDDHTAWVKGSVPPPLDQHVKFDAVSGDYYPIVYFNDYWNLQKDYYPINDTLLNLPLRLTYCPLSLWRWQLYAAQSARSPWNFLGEDTYEQSDEDQDSVKVALLETNPYLLGLTIVVSIVHSIFEFLAFKNDIQFWNSRQSLEGLSVRSIIFGVFQSLVVLLYILDNETNFVVQVSVFIGLLIDFWKITKVMDVRLDRENRIAGIVPRLVFKDKSTYVESSTKIYDDMAFKYLSWLLYPLFGCYAVYSLLYVEHKGWYSWVLSMLYGFLLTFGFITMTPQLFINYKMKSVAHLPWRMLTYKALNTFIDDLFAFVIKMPMMYRIGCLRDDVVFFIYLYQRWIYRVDPNRVNEFGTSGVDHSKDSSAQPAAGETPAAITEKPEGEKKND</sequence>
<keyword id="KW-0217">Developmental protein</keyword>
<keyword id="KW-0221">Differentiation</keyword>
<keyword id="KW-0325">Glycoprotein</keyword>
<keyword id="KW-0472">Membrane</keyword>
<keyword id="KW-1185">Reference proteome</keyword>
<keyword id="KW-0812">Transmembrane</keyword>
<keyword id="KW-1133">Transmembrane helix</keyword>
<feature type="chain" id="PRO_0000245098" description="Putative lipid scramblase CLPTM1">
    <location>
        <begin position="1"/>
        <end position="631"/>
    </location>
</feature>
<feature type="topological domain" description="Extracellular" evidence="4">
    <location>
        <begin position="1"/>
        <end position="352"/>
    </location>
</feature>
<feature type="transmembrane region" description="Helical" evidence="4">
    <location>
        <begin position="353"/>
        <end position="373"/>
    </location>
</feature>
<feature type="topological domain" description="Cytoplasmic" evidence="4">
    <location>
        <begin position="374"/>
        <end position="388"/>
    </location>
</feature>
<feature type="transmembrane region" description="Helical" evidence="4">
    <location>
        <begin position="389"/>
        <end position="409"/>
    </location>
</feature>
<feature type="topological domain" description="Extracellular" evidence="4">
    <location>
        <begin position="410"/>
        <end position="414"/>
    </location>
</feature>
<feature type="transmembrane region" description="Helical" evidence="4">
    <location>
        <begin position="415"/>
        <end position="435"/>
    </location>
</feature>
<feature type="topological domain" description="Cytoplasmic" evidence="4">
    <location>
        <begin position="436"/>
        <end position="475"/>
    </location>
</feature>
<feature type="transmembrane region" description="Helical" evidence="4">
    <location>
        <begin position="476"/>
        <end position="496"/>
    </location>
</feature>
<feature type="topological domain" description="Extracellular" evidence="4">
    <location>
        <begin position="497"/>
        <end position="500"/>
    </location>
</feature>
<feature type="transmembrane region" description="Helical" evidence="4">
    <location>
        <begin position="501"/>
        <end position="521"/>
    </location>
</feature>
<feature type="topological domain" description="Cytoplasmic" evidence="4">
    <location>
        <begin position="522"/>
        <end position="631"/>
    </location>
</feature>
<feature type="region of interest" description="Disordered" evidence="5">
    <location>
        <begin position="1"/>
        <end position="47"/>
    </location>
</feature>
<feature type="region of interest" description="Disordered" evidence="5">
    <location>
        <begin position="599"/>
        <end position="631"/>
    </location>
</feature>
<feature type="compositionally biased region" description="Low complexity" evidence="5">
    <location>
        <begin position="1"/>
        <end position="23"/>
    </location>
</feature>
<feature type="compositionally biased region" description="Low complexity" evidence="5">
    <location>
        <begin position="31"/>
        <end position="47"/>
    </location>
</feature>
<feature type="compositionally biased region" description="Basic and acidic residues" evidence="5">
    <location>
        <begin position="622"/>
        <end position="631"/>
    </location>
</feature>
<feature type="glycosylation site" description="N-linked (GlcNAc...) asparagine" evidence="4">
    <location>
        <position position="117"/>
    </location>
</feature>
<feature type="glycosylation site" description="N-linked (GlcNAc...) asparagine" evidence="4">
    <location>
        <position position="159"/>
    </location>
</feature>
<feature type="glycosylation site" description="N-linked (GlcNAc...) asparagine" evidence="4">
    <location>
        <position position="239"/>
    </location>
</feature>
<feature type="glycosylation site" description="N-linked (GlcNAc...) asparagine" evidence="4">
    <location>
        <position position="293"/>
    </location>
</feature>
<feature type="glycosylation site" description="N-linked (GlcNAc...) asparagine" evidence="4">
    <location>
        <position position="411"/>
    </location>
</feature>
<accession>Q6DEL2</accession>